<dbReference type="EC" id="2.7.11.-" evidence="8"/>
<dbReference type="EMBL" id="AP003736">
    <property type="protein sequence ID" value="BAD30125.1"/>
    <property type="status" value="ALT_SEQ"/>
    <property type="molecule type" value="Genomic_DNA"/>
</dbReference>
<dbReference type="EMBL" id="AP005786">
    <property type="protein sequence ID" value="BAC65053.1"/>
    <property type="status" value="ALT_SEQ"/>
    <property type="molecule type" value="Genomic_DNA"/>
</dbReference>
<dbReference type="EMBL" id="AP008213">
    <property type="protein sequence ID" value="BAF21810.1"/>
    <property type="molecule type" value="Genomic_DNA"/>
</dbReference>
<dbReference type="EMBL" id="AP014963">
    <property type="protein sequence ID" value="BAT01968.1"/>
    <property type="molecule type" value="Genomic_DNA"/>
</dbReference>
<dbReference type="RefSeq" id="XP_015644888.1">
    <property type="nucleotide sequence ID" value="XM_015789402.1"/>
</dbReference>
<dbReference type="RefSeq" id="XP_015644889.1">
    <property type="nucleotide sequence ID" value="XM_015789403.1"/>
</dbReference>
<dbReference type="SMR" id="Q0D5R3"/>
<dbReference type="FunCoup" id="Q0D5R3">
    <property type="interactions" value="15"/>
</dbReference>
<dbReference type="STRING" id="39947.Q0D5R3"/>
<dbReference type="GlyCosmos" id="Q0D5R3">
    <property type="glycosylation" value="5 sites, No reported glycans"/>
</dbReference>
<dbReference type="PaxDb" id="39947-Q0D5R3"/>
<dbReference type="EnsemblPlants" id="Os07t0541400-01">
    <property type="protein sequence ID" value="Os07t0541400-01"/>
    <property type="gene ID" value="Os07g0541400"/>
</dbReference>
<dbReference type="Gramene" id="Os07t0541400-01">
    <property type="protein sequence ID" value="Os07t0541400-01"/>
    <property type="gene ID" value="Os07g0541400"/>
</dbReference>
<dbReference type="KEGG" id="dosa:Os07g0541400"/>
<dbReference type="eggNOG" id="ENOG502QWDY">
    <property type="taxonomic scope" value="Eukaryota"/>
</dbReference>
<dbReference type="HOGENOM" id="CLU_000288_35_7_1"/>
<dbReference type="InParanoid" id="Q0D5R3"/>
<dbReference type="OMA" id="LCAPYPP"/>
<dbReference type="OrthoDB" id="688481at2759"/>
<dbReference type="Proteomes" id="UP000000763">
    <property type="component" value="Chromosome 7"/>
</dbReference>
<dbReference type="Proteomes" id="UP000059680">
    <property type="component" value="Chromosome 7"/>
</dbReference>
<dbReference type="GO" id="GO:0005886">
    <property type="term" value="C:plasma membrane"/>
    <property type="evidence" value="ECO:0000318"/>
    <property type="project" value="GO_Central"/>
</dbReference>
<dbReference type="GO" id="GO:0005524">
    <property type="term" value="F:ATP binding"/>
    <property type="evidence" value="ECO:0007669"/>
    <property type="project" value="UniProtKB-KW"/>
</dbReference>
<dbReference type="GO" id="GO:0004672">
    <property type="term" value="F:protein kinase activity"/>
    <property type="evidence" value="ECO:0000314"/>
    <property type="project" value="UniProtKB"/>
</dbReference>
<dbReference type="GO" id="GO:0004674">
    <property type="term" value="F:protein serine/threonine kinase activity"/>
    <property type="evidence" value="ECO:0000318"/>
    <property type="project" value="GO_Central"/>
</dbReference>
<dbReference type="GO" id="GO:0042742">
    <property type="term" value="P:defense response to bacterium"/>
    <property type="evidence" value="ECO:0000315"/>
    <property type="project" value="UniProtKB"/>
</dbReference>
<dbReference type="GO" id="GO:0006955">
    <property type="term" value="P:immune response"/>
    <property type="evidence" value="ECO:0000318"/>
    <property type="project" value="GO_Central"/>
</dbReference>
<dbReference type="GO" id="GO:0007165">
    <property type="term" value="P:signal transduction"/>
    <property type="evidence" value="ECO:0000318"/>
    <property type="project" value="GO_Central"/>
</dbReference>
<dbReference type="CDD" id="cd23509">
    <property type="entry name" value="Gnk2-like"/>
    <property type="match status" value="2"/>
</dbReference>
<dbReference type="CDD" id="cd14066">
    <property type="entry name" value="STKc_IRAK"/>
    <property type="match status" value="1"/>
</dbReference>
<dbReference type="FunFam" id="3.30.200.20:FF:000142">
    <property type="entry name" value="Cysteine-rich receptor-like protein kinase 10"/>
    <property type="match status" value="1"/>
</dbReference>
<dbReference type="FunFam" id="1.10.510.10:FF:000129">
    <property type="entry name" value="cysteine-rich receptor-like protein kinase 10"/>
    <property type="match status" value="1"/>
</dbReference>
<dbReference type="FunFam" id="3.30.430.20:FF:000004">
    <property type="entry name" value="Receptor-like serine-threonine protein kinase"/>
    <property type="match status" value="1"/>
</dbReference>
<dbReference type="FunFam" id="3.30.430.20:FF:000006">
    <property type="entry name" value="Receptor-like serine-threonine protein kinase"/>
    <property type="match status" value="1"/>
</dbReference>
<dbReference type="Gene3D" id="3.30.430.20">
    <property type="entry name" value="Gnk2 domain, C-X8-C-X2-C motif"/>
    <property type="match status" value="2"/>
</dbReference>
<dbReference type="Gene3D" id="3.30.200.20">
    <property type="entry name" value="Phosphorylase Kinase, domain 1"/>
    <property type="match status" value="1"/>
</dbReference>
<dbReference type="Gene3D" id="1.10.510.10">
    <property type="entry name" value="Transferase(Phosphotransferase) domain 1"/>
    <property type="match status" value="1"/>
</dbReference>
<dbReference type="InterPro" id="IPR002902">
    <property type="entry name" value="GNK2"/>
</dbReference>
<dbReference type="InterPro" id="IPR038408">
    <property type="entry name" value="GNK2_sf"/>
</dbReference>
<dbReference type="InterPro" id="IPR011009">
    <property type="entry name" value="Kinase-like_dom_sf"/>
</dbReference>
<dbReference type="InterPro" id="IPR000719">
    <property type="entry name" value="Prot_kinase_dom"/>
</dbReference>
<dbReference type="InterPro" id="IPR017441">
    <property type="entry name" value="Protein_kinase_ATP_BS"/>
</dbReference>
<dbReference type="InterPro" id="IPR001245">
    <property type="entry name" value="Ser-Thr/Tyr_kinase_cat_dom"/>
</dbReference>
<dbReference type="InterPro" id="IPR008271">
    <property type="entry name" value="Ser/Thr_kinase_AS"/>
</dbReference>
<dbReference type="PANTHER" id="PTHR27002:SF126">
    <property type="entry name" value="CYSTEINE-RICH RECEPTOR-LIKE PROTEIN KINASE 6"/>
    <property type="match status" value="1"/>
</dbReference>
<dbReference type="PANTHER" id="PTHR27002">
    <property type="entry name" value="RECEPTOR-LIKE SERINE/THREONINE-PROTEIN KINASE SD1-8"/>
    <property type="match status" value="1"/>
</dbReference>
<dbReference type="Pfam" id="PF07714">
    <property type="entry name" value="PK_Tyr_Ser-Thr"/>
    <property type="match status" value="1"/>
</dbReference>
<dbReference type="Pfam" id="PF01657">
    <property type="entry name" value="Stress-antifung"/>
    <property type="match status" value="2"/>
</dbReference>
<dbReference type="SMART" id="SM00220">
    <property type="entry name" value="S_TKc"/>
    <property type="match status" value="1"/>
</dbReference>
<dbReference type="SUPFAM" id="SSF56112">
    <property type="entry name" value="Protein kinase-like (PK-like)"/>
    <property type="match status" value="1"/>
</dbReference>
<dbReference type="PROSITE" id="PS51473">
    <property type="entry name" value="GNK2"/>
    <property type="match status" value="2"/>
</dbReference>
<dbReference type="PROSITE" id="PS00107">
    <property type="entry name" value="PROTEIN_KINASE_ATP"/>
    <property type="match status" value="1"/>
</dbReference>
<dbReference type="PROSITE" id="PS50011">
    <property type="entry name" value="PROTEIN_KINASE_DOM"/>
    <property type="match status" value="1"/>
</dbReference>
<dbReference type="PROSITE" id="PS00108">
    <property type="entry name" value="PROTEIN_KINASE_ST"/>
    <property type="match status" value="1"/>
</dbReference>
<gene>
    <name evidence="7" type="primary">CRK6</name>
    <name evidence="11" type="ordered locus">Os07g0541400</name>
    <name evidence="8" type="ordered locus">LOC_Os07g35690</name>
    <name evidence="10" type="ORF">OJ1008_E09.114</name>
    <name evidence="9" type="ORF">P0458H05.131</name>
</gene>
<feature type="signal peptide" evidence="1">
    <location>
        <begin position="1"/>
        <end position="31"/>
    </location>
</feature>
<feature type="chain" id="PRO_5007318556" description="Cysteine-rich receptor-like protein kinase 6" evidence="1">
    <location>
        <begin position="32"/>
        <end position="695"/>
    </location>
</feature>
<feature type="topological domain" description="Extracellular" evidence="8">
    <location>
        <begin position="32"/>
        <end position="294"/>
    </location>
</feature>
<feature type="transmembrane region" description="Helical" evidence="1">
    <location>
        <begin position="295"/>
        <end position="315"/>
    </location>
</feature>
<feature type="topological domain" description="Cytoplasmic" evidence="8">
    <location>
        <begin position="316"/>
        <end position="695"/>
    </location>
</feature>
<feature type="domain" description="Gnk2-homologous 1" evidence="4">
    <location>
        <begin position="38"/>
        <end position="142"/>
    </location>
</feature>
<feature type="domain" description="Gnk2-homologous 2" evidence="4">
    <location>
        <begin position="151"/>
        <end position="261"/>
    </location>
</feature>
<feature type="domain" description="Protein kinase" evidence="2">
    <location>
        <begin position="363"/>
        <end position="634"/>
    </location>
</feature>
<feature type="region of interest" description="Disordered" evidence="5">
    <location>
        <begin position="658"/>
        <end position="682"/>
    </location>
</feature>
<feature type="active site" description="Proton acceptor" evidence="2">
    <location>
        <position position="488"/>
    </location>
</feature>
<feature type="binding site" evidence="2">
    <location>
        <begin position="369"/>
        <end position="377"/>
    </location>
    <ligand>
        <name>ATP</name>
        <dbReference type="ChEBI" id="CHEBI:30616"/>
    </ligand>
</feature>
<feature type="binding site" evidence="2">
    <location>
        <position position="391"/>
    </location>
    <ligand>
        <name>ATP</name>
        <dbReference type="ChEBI" id="CHEBI:30616"/>
    </ligand>
</feature>
<feature type="glycosylation site" description="N-linked (GlcNAc...) asparagine" evidence="3">
    <location>
        <position position="49"/>
    </location>
</feature>
<feature type="glycosylation site" description="N-linked (GlcNAc...) asparagine" evidence="3">
    <location>
        <position position="53"/>
    </location>
</feature>
<feature type="glycosylation site" description="N-linked (GlcNAc...) asparagine" evidence="3">
    <location>
        <position position="70"/>
    </location>
</feature>
<feature type="glycosylation site" description="N-linked (GlcNAc...) asparagine" evidence="3">
    <location>
        <position position="101"/>
    </location>
</feature>
<feature type="glycosylation site" description="N-linked (GlcNAc...) asparagine" evidence="3">
    <location>
        <position position="178"/>
    </location>
</feature>
<feature type="disulfide bond" evidence="4">
    <location>
        <begin position="96"/>
        <end position="105"/>
    </location>
</feature>
<feature type="disulfide bond" evidence="4">
    <location>
        <begin position="108"/>
        <end position="133"/>
    </location>
</feature>
<feature type="disulfide bond" evidence="4">
    <location>
        <begin position="215"/>
        <end position="224"/>
    </location>
</feature>
<feature type="disulfide bond" evidence="4">
    <location>
        <begin position="227"/>
        <end position="252"/>
    </location>
</feature>
<feature type="mutagenesis site" description="Loss of kinase activity." evidence="6">
    <original>D</original>
    <variation>N</variation>
    <location>
        <position position="488"/>
    </location>
</feature>
<comment type="function">
    <text evidence="6">Involved in disease resistance. Required for NPR1/NH1-mediated immunity to the bacterial blight pathogen Xanthomomas oryzae pv. oryzae (Xoo). Required for the benzothiadiazole (BTH)-induced immune response. Possesses kinase activity in vitro.</text>
</comment>
<comment type="subcellular location">
    <subcellularLocation>
        <location evidence="1">Membrane</location>
        <topology evidence="1">Single-pass membrane protein</topology>
    </subcellularLocation>
</comment>
<comment type="induction">
    <text evidence="6">Induced by benzothiadiazole (BTH).</text>
</comment>
<comment type="similarity">
    <text evidence="2">Belongs to the protein kinase superfamily. Ser/Thr protein kinase family. CRK subfamily.</text>
</comment>
<comment type="sequence caution" evidence="8">
    <conflict type="erroneous gene model prediction">
        <sequence resource="EMBL-CDS" id="BAC65053"/>
    </conflict>
</comment>
<comment type="sequence caution" evidence="8">
    <conflict type="erroneous gene model prediction">
        <sequence resource="EMBL-CDS" id="BAD30125"/>
    </conflict>
</comment>
<organism>
    <name type="scientific">Oryza sativa subsp. japonica</name>
    <name type="common">Rice</name>
    <dbReference type="NCBI Taxonomy" id="39947"/>
    <lineage>
        <taxon>Eukaryota</taxon>
        <taxon>Viridiplantae</taxon>
        <taxon>Streptophyta</taxon>
        <taxon>Embryophyta</taxon>
        <taxon>Tracheophyta</taxon>
        <taxon>Spermatophyta</taxon>
        <taxon>Magnoliopsida</taxon>
        <taxon>Liliopsida</taxon>
        <taxon>Poales</taxon>
        <taxon>Poaceae</taxon>
        <taxon>BOP clade</taxon>
        <taxon>Oryzoideae</taxon>
        <taxon>Oryzeae</taxon>
        <taxon>Oryzinae</taxon>
        <taxon>Oryza</taxon>
        <taxon>Oryza sativa</taxon>
    </lineage>
</organism>
<keyword id="KW-0067">ATP-binding</keyword>
<keyword id="KW-1015">Disulfide bond</keyword>
<keyword id="KW-0325">Glycoprotein</keyword>
<keyword id="KW-0418">Kinase</keyword>
<keyword id="KW-0472">Membrane</keyword>
<keyword id="KW-0547">Nucleotide-binding</keyword>
<keyword id="KW-0611">Plant defense</keyword>
<keyword id="KW-1185">Reference proteome</keyword>
<keyword id="KW-0677">Repeat</keyword>
<keyword id="KW-0723">Serine/threonine-protein kinase</keyword>
<keyword id="KW-0732">Signal</keyword>
<keyword id="KW-0808">Transferase</keyword>
<keyword id="KW-0812">Transmembrane</keyword>
<keyword id="KW-1133">Transmembrane helix</keyword>
<protein>
    <recommendedName>
        <fullName evidence="8">Cysteine-rich receptor-like protein kinase 6</fullName>
        <shortName evidence="8">Cysteine-rich RLK6</shortName>
        <ecNumber evidence="8">2.7.11.-</ecNumber>
    </recommendedName>
</protein>
<accession>Q0D5R3</accession>
<accession>Q84S61</accession>
<name>CRK6_ORYSJ</name>
<sequence length="695" mass="76461">MRRHRPYLDGVAAAAATFLLAVLLHAPLAAGEDEPPPWVLCGPYPPSGNYSKNGTYQVNLDLLSTTLPKNTSSSPAMYATGTVGDVPDKVYGLALCRGDANASACERCVAAALRDAPRRCPLVKDVLVFYDLCQLRYSNRDFFLDDDYFVTTYTLQRSRRVGAAAAAAFDAAVAVLVNATADYAAADSSRRYGTGEEEGVDGDSDRPKIYALAQCTPDKTPEVCRTCLSTVIGQLPKEFSGRTGGGMFGVWCNFRYEVFPFFSGRPLLQLPAFVETPPPPPSPSATSGEKTKNRIGTVLAIVMPAIAAILLMVVACFCCWKRIKKRRPEEQTFLSYSVSSDDIQSIDSLILDLPTIRVATDDFADTKMIGQGGFGMVYKGVLPDGQEIAVKRLCQSSRQGIGELKSELILVAKLYHKNLVRLIGVCLEQQEKILVYEYMPNGSLDIVLFDTDKNRELDWGKRFKIINGIARGLQYLHEDSQLKIVHRDLKASNILLDFDYSPKISDFGLAKIFGGDQSEDVTNRIAGTYGYMAPEYAMRGNYSIKSDVFSFGVLVLEIITGRRNTGSYDSGQDVDLLNLVWEHWTRGNVVELIDPSMGDHPPIEQMLKCIHIGLLCVQKKPASRPTISSVNIMLSSNTVRLPSLSRPAFCIQEVSASDSSNPYSERYPRPRHSGYSDNSTVVSSNDLSITELVPR</sequence>
<evidence type="ECO:0000255" key="1"/>
<evidence type="ECO:0000255" key="2">
    <source>
        <dbReference type="PROSITE-ProRule" id="PRU00159"/>
    </source>
</evidence>
<evidence type="ECO:0000255" key="3">
    <source>
        <dbReference type="PROSITE-ProRule" id="PRU00498"/>
    </source>
</evidence>
<evidence type="ECO:0000255" key="4">
    <source>
        <dbReference type="PROSITE-ProRule" id="PRU00806"/>
    </source>
</evidence>
<evidence type="ECO:0000256" key="5">
    <source>
        <dbReference type="SAM" id="MobiDB-lite"/>
    </source>
</evidence>
<evidence type="ECO:0000269" key="6">
    <source>
    </source>
</evidence>
<evidence type="ECO:0000303" key="7">
    <source>
    </source>
</evidence>
<evidence type="ECO:0000305" key="8"/>
<evidence type="ECO:0000312" key="9">
    <source>
        <dbReference type="EMBL" id="BAC65053.1"/>
    </source>
</evidence>
<evidence type="ECO:0000312" key="10">
    <source>
        <dbReference type="EMBL" id="BAD30125.1"/>
    </source>
</evidence>
<evidence type="ECO:0000312" key="11">
    <source>
        <dbReference type="EMBL" id="BAF21810.1"/>
    </source>
</evidence>
<reference key="1">
    <citation type="journal article" date="2005" name="Nature">
        <title>The map-based sequence of the rice genome.</title>
        <authorList>
            <consortium name="International rice genome sequencing project (IRGSP)"/>
        </authorList>
    </citation>
    <scope>NUCLEOTIDE SEQUENCE [LARGE SCALE GENOMIC DNA]</scope>
    <source>
        <strain>cv. Nipponbare</strain>
    </source>
</reference>
<reference key="2">
    <citation type="journal article" date="2008" name="Nucleic Acids Res.">
        <title>The rice annotation project database (RAP-DB): 2008 update.</title>
        <authorList>
            <consortium name="The rice annotation project (RAP)"/>
        </authorList>
    </citation>
    <scope>GENOME REANNOTATION</scope>
    <source>
        <strain>cv. Nipponbare</strain>
    </source>
</reference>
<reference key="3">
    <citation type="journal article" date="2013" name="Rice">
        <title>Improvement of the Oryza sativa Nipponbare reference genome using next generation sequence and optical map data.</title>
        <authorList>
            <person name="Kawahara Y."/>
            <person name="de la Bastide M."/>
            <person name="Hamilton J.P."/>
            <person name="Kanamori H."/>
            <person name="McCombie W.R."/>
            <person name="Ouyang S."/>
            <person name="Schwartz D.C."/>
            <person name="Tanaka T."/>
            <person name="Wu J."/>
            <person name="Zhou S."/>
            <person name="Childs K.L."/>
            <person name="Davidson R.M."/>
            <person name="Lin H."/>
            <person name="Quesada-Ocampo L."/>
            <person name="Vaillancourt B."/>
            <person name="Sakai H."/>
            <person name="Lee S.S."/>
            <person name="Kim J."/>
            <person name="Numa H."/>
            <person name="Itoh T."/>
            <person name="Buell C.R."/>
            <person name="Matsumoto T."/>
        </authorList>
    </citation>
    <scope>GENOME REANNOTATION</scope>
    <source>
        <strain>cv. Nipponbare</strain>
    </source>
</reference>
<reference key="4">
    <citation type="journal article" date="2016" name="PLoS Genet.">
        <title>A genetic screen identifies a requirement for cysteine-rich-receptor-like kinases in rice NH1 (OsNPR1)-mediated immunity.</title>
        <authorList>
            <person name="Chern M."/>
            <person name="Xu Q."/>
            <person name="Bart R.S."/>
            <person name="Bai W."/>
            <person name="Ruan D."/>
            <person name="Sze-To W.H."/>
            <person name="Canlas P.E."/>
            <person name="Jain R."/>
            <person name="Chen X."/>
            <person name="Ronald P.C."/>
        </authorList>
    </citation>
    <scope>FUNCTION</scope>
    <scope>INDUCTION BY BENZOTHIADIAZOLE</scope>
    <scope>MUTAGENESIS OF ASP-488</scope>
</reference>
<proteinExistence type="evidence at protein level"/>